<comment type="function">
    <text evidence="2 3">Part of the ESX-3 specialized secretion system, which is important for iron and zinc uptake or homeostasis (By similarity). EccA3 exhibits ATPase activity and may provide energy for the export of ESX-3 substrates (By similarity).</text>
</comment>
<comment type="subunit">
    <text evidence="2">Part of the ESX-3 / type VII secretion system (T7SS), which is composed of cytosolic and membrane components.</text>
</comment>
<comment type="subcellular location">
    <subcellularLocation>
        <location evidence="1">Cytoplasm</location>
    </subcellularLocation>
</comment>
<comment type="similarity">
    <text evidence="5">Belongs to the CbxX/CfxQ family.</text>
</comment>
<comment type="sequence caution" evidence="5">
    <conflict type="erroneous initiation">
        <sequence resource="EMBL-CDS" id="AAK44519"/>
    </conflict>
    <text>Truncated N-terminus.</text>
</comment>
<proteinExistence type="inferred from homology"/>
<feature type="chain" id="PRO_0000426947" description="ESX-3 secretion system protein EccA3">
    <location>
        <begin position="1"/>
        <end position="631"/>
    </location>
</feature>
<feature type="binding site" evidence="4">
    <location>
        <begin position="385"/>
        <end position="392"/>
    </location>
    <ligand>
        <name>ATP</name>
        <dbReference type="ChEBI" id="CHEBI:30616"/>
    </ligand>
</feature>
<keyword id="KW-0067">ATP-binding</keyword>
<keyword id="KW-0963">Cytoplasm</keyword>
<keyword id="KW-0547">Nucleotide-binding</keyword>
<keyword id="KW-1185">Reference proteome</keyword>
<gene>
    <name evidence="3" type="primary">eccA3</name>
    <name type="ordered locus">MT0295</name>
</gene>
<organism>
    <name type="scientific">Mycobacterium tuberculosis (strain CDC 1551 / Oshkosh)</name>
    <dbReference type="NCBI Taxonomy" id="83331"/>
    <lineage>
        <taxon>Bacteria</taxon>
        <taxon>Bacillati</taxon>
        <taxon>Actinomycetota</taxon>
        <taxon>Actinomycetes</taxon>
        <taxon>Mycobacteriales</taxon>
        <taxon>Mycobacteriaceae</taxon>
        <taxon>Mycobacterium</taxon>
        <taxon>Mycobacterium tuberculosis complex</taxon>
    </lineage>
</organism>
<evidence type="ECO:0000250" key="1">
    <source>
        <dbReference type="UniProtKB" id="B2HSU9"/>
    </source>
</evidence>
<evidence type="ECO:0000250" key="2">
    <source>
        <dbReference type="UniProtKB" id="P9WPH9"/>
    </source>
</evidence>
<evidence type="ECO:0000250" key="3">
    <source>
        <dbReference type="UniProtKB" id="P9WPI3"/>
    </source>
</evidence>
<evidence type="ECO:0000255" key="4"/>
<evidence type="ECO:0000305" key="5"/>
<dbReference type="EMBL" id="AE000516">
    <property type="protein sequence ID" value="AAK44519.1"/>
    <property type="status" value="ALT_INIT"/>
    <property type="molecule type" value="Genomic_DNA"/>
</dbReference>
<dbReference type="PIR" id="H70835">
    <property type="entry name" value="H70835"/>
</dbReference>
<dbReference type="SMR" id="P9WPI2"/>
<dbReference type="KEGG" id="mtc:MT0295"/>
<dbReference type="PATRIC" id="fig|83331.31.peg.318"/>
<dbReference type="HOGENOM" id="CLU_008749_5_0_11"/>
<dbReference type="Proteomes" id="UP000001020">
    <property type="component" value="Chromosome"/>
</dbReference>
<dbReference type="GO" id="GO:0005737">
    <property type="term" value="C:cytoplasm"/>
    <property type="evidence" value="ECO:0007669"/>
    <property type="project" value="UniProtKB-SubCell"/>
</dbReference>
<dbReference type="GO" id="GO:0005524">
    <property type="term" value="F:ATP binding"/>
    <property type="evidence" value="ECO:0007669"/>
    <property type="project" value="UniProtKB-KW"/>
</dbReference>
<dbReference type="GO" id="GO:0016887">
    <property type="term" value="F:ATP hydrolysis activity"/>
    <property type="evidence" value="ECO:0007669"/>
    <property type="project" value="InterPro"/>
</dbReference>
<dbReference type="CDD" id="cd00009">
    <property type="entry name" value="AAA"/>
    <property type="match status" value="1"/>
</dbReference>
<dbReference type="FunFam" id="3.40.50.300:FF:000216">
    <property type="entry name" value="Type VII secretion ATPase EccA"/>
    <property type="match status" value="1"/>
</dbReference>
<dbReference type="Gene3D" id="1.10.8.60">
    <property type="match status" value="1"/>
</dbReference>
<dbReference type="Gene3D" id="3.40.50.300">
    <property type="entry name" value="P-loop containing nucleotide triphosphate hydrolases"/>
    <property type="match status" value="1"/>
</dbReference>
<dbReference type="Gene3D" id="1.25.40.10">
    <property type="entry name" value="Tetratricopeptide repeat domain"/>
    <property type="match status" value="1"/>
</dbReference>
<dbReference type="InterPro" id="IPR003593">
    <property type="entry name" value="AAA+_ATPase"/>
</dbReference>
<dbReference type="InterPro" id="IPR041627">
    <property type="entry name" value="AAA_lid_6"/>
</dbReference>
<dbReference type="InterPro" id="IPR003959">
    <property type="entry name" value="ATPase_AAA_core"/>
</dbReference>
<dbReference type="InterPro" id="IPR000641">
    <property type="entry name" value="CbxX/CfxQ"/>
</dbReference>
<dbReference type="InterPro" id="IPR050773">
    <property type="entry name" value="CbxX/CfxQ_RuBisCO_ESX"/>
</dbReference>
<dbReference type="InterPro" id="IPR027417">
    <property type="entry name" value="P-loop_NTPase"/>
</dbReference>
<dbReference type="InterPro" id="IPR023835">
    <property type="entry name" value="T7SS_EccA"/>
</dbReference>
<dbReference type="InterPro" id="IPR049078">
    <property type="entry name" value="T7SS_EccA1-like_N"/>
</dbReference>
<dbReference type="InterPro" id="IPR011990">
    <property type="entry name" value="TPR-like_helical_dom_sf"/>
</dbReference>
<dbReference type="NCBIfam" id="TIGR03922">
    <property type="entry name" value="T7SS_EccA"/>
    <property type="match status" value="1"/>
</dbReference>
<dbReference type="PANTHER" id="PTHR43392">
    <property type="entry name" value="AAA-TYPE ATPASE FAMILY PROTEIN / ANKYRIN REPEAT FAMILY PROTEIN"/>
    <property type="match status" value="1"/>
</dbReference>
<dbReference type="PANTHER" id="PTHR43392:SF2">
    <property type="entry name" value="AAA-TYPE ATPASE FAMILY PROTEIN _ ANKYRIN REPEAT FAMILY PROTEIN"/>
    <property type="match status" value="1"/>
</dbReference>
<dbReference type="Pfam" id="PF00004">
    <property type="entry name" value="AAA"/>
    <property type="match status" value="1"/>
</dbReference>
<dbReference type="Pfam" id="PF17866">
    <property type="entry name" value="AAA_lid_6"/>
    <property type="match status" value="1"/>
</dbReference>
<dbReference type="Pfam" id="PF21545">
    <property type="entry name" value="T7SS_EccA1_N"/>
    <property type="match status" value="1"/>
</dbReference>
<dbReference type="PRINTS" id="PR00819">
    <property type="entry name" value="CBXCFQXSUPER"/>
</dbReference>
<dbReference type="SMART" id="SM00382">
    <property type="entry name" value="AAA"/>
    <property type="match status" value="1"/>
</dbReference>
<dbReference type="SUPFAM" id="SSF52540">
    <property type="entry name" value="P-loop containing nucleoside triphosphate hydrolases"/>
    <property type="match status" value="1"/>
</dbReference>
<protein>
    <recommendedName>
        <fullName evidence="3">ESX-3 secretion system protein EccA3</fullName>
    </recommendedName>
    <alternativeName>
        <fullName evidence="3">ESX conserved component A3</fullName>
    </alternativeName>
    <alternativeName>
        <fullName evidence="3">Type VII secretion system protein EccA3</fullName>
        <shortName evidence="3">T7SS protein EccA3</shortName>
    </alternativeName>
</protein>
<accession>P9WPI2</accession>
<accession>L0T677</accession>
<accession>O53687</accession>
<reference key="1">
    <citation type="journal article" date="2002" name="J. Bacteriol.">
        <title>Whole-genome comparison of Mycobacterium tuberculosis clinical and laboratory strains.</title>
        <authorList>
            <person name="Fleischmann R.D."/>
            <person name="Alland D."/>
            <person name="Eisen J.A."/>
            <person name="Carpenter L."/>
            <person name="White O."/>
            <person name="Peterson J.D."/>
            <person name="DeBoy R.T."/>
            <person name="Dodson R.J."/>
            <person name="Gwinn M.L."/>
            <person name="Haft D.H."/>
            <person name="Hickey E.K."/>
            <person name="Kolonay J.F."/>
            <person name="Nelson W.C."/>
            <person name="Umayam L.A."/>
            <person name="Ermolaeva M.D."/>
            <person name="Salzberg S.L."/>
            <person name="Delcher A."/>
            <person name="Utterback T.R."/>
            <person name="Weidman J.F."/>
            <person name="Khouri H.M."/>
            <person name="Gill J."/>
            <person name="Mikula A."/>
            <person name="Bishai W."/>
            <person name="Jacobs W.R. Jr."/>
            <person name="Venter J.C."/>
            <person name="Fraser C.M."/>
        </authorList>
    </citation>
    <scope>NUCLEOTIDE SEQUENCE [LARGE SCALE GENOMIC DNA]</scope>
    <source>
        <strain>CDC 1551 / Oshkosh</strain>
    </source>
</reference>
<sequence length="631" mass="68107">MAGVGEGDSGGVERDDIGMVAASPVASRVNGKVDADVVGRFATCCRALGIAVYQRKRPPDLAAARSGFAALTRVAHDQCDAWTGLAAAGDQSIGVLEAASRTATTAGVLQRQVELADNALGFLYDTGLYLRFRATGPDDFHLAYAAALASTGGPEEFAKANHVVSGITERRAGWRAARWLAVVINYRAERWSDVVKLLTPMVNDPDLDEAFSHAAKITLGTALARLGMFAPALSYLEEPDGPVAVAAVDGALAKALVLRAHVDEESASEVLQDLYAAHPENEQVEQALSDTSFGIVTTTAGRIEARTDPWDPATEPGAEDFVDPAAHERKAALLHEAELQLAEFIGLDEVKRQVSRLKSSVAMELVRKQRGLTVAQRTHHLVFAGPPGTGKTTIARVVAKIYCGLGLLKRENIREVHRADLIGQHIGETEAKTNAIIDSALDGVLFLDEAYALVATGAKNDFGLVAIDTLLARMENDRDRLVVIIAGYRADLDKFLDTNEGLRSRFTRNIDFPSYTSHELVEIAHKMAEQRDSVFEQSALHDLEALFAKLAAESTPDTNGISRRSLDIAGNGRFVRNIVERSEEEREFRLDHSEHAGSGEFSDEELMTITADDVGRSVEPLLRGLGLSVRA</sequence>
<name>ECCA3_MYCTO</name>